<feature type="chain" id="PRO_0000143431" description="Maturase K">
    <location>
        <begin position="1"/>
        <end position="509"/>
    </location>
</feature>
<organism>
    <name type="scientific">Ibicella lutea</name>
    <name type="common">Yellow unicorn-plant</name>
    <name type="synonym">Martynia lutea</name>
    <dbReference type="NCBI Taxonomy" id="204345"/>
    <lineage>
        <taxon>Eukaryota</taxon>
        <taxon>Viridiplantae</taxon>
        <taxon>Streptophyta</taxon>
        <taxon>Embryophyta</taxon>
        <taxon>Tracheophyta</taxon>
        <taxon>Spermatophyta</taxon>
        <taxon>Magnoliopsida</taxon>
        <taxon>eudicotyledons</taxon>
        <taxon>Gunneridae</taxon>
        <taxon>Pentapetalae</taxon>
        <taxon>asterids</taxon>
        <taxon>lamiids</taxon>
        <taxon>Lamiales</taxon>
        <taxon>Martyniaceae</taxon>
        <taxon>Ibicella</taxon>
    </lineage>
</organism>
<proteinExistence type="inferred from homology"/>
<geneLocation type="chloroplast"/>
<gene>
    <name evidence="1" type="primary">matK</name>
</gene>
<accession>Q7YKQ2</accession>
<keyword id="KW-0150">Chloroplast</keyword>
<keyword id="KW-0507">mRNA processing</keyword>
<keyword id="KW-0934">Plastid</keyword>
<keyword id="KW-0694">RNA-binding</keyword>
<keyword id="KW-0819">tRNA processing</keyword>
<dbReference type="EMBL" id="AF531778">
    <property type="protein sequence ID" value="AAP87838.1"/>
    <property type="molecule type" value="Genomic_DNA"/>
</dbReference>
<dbReference type="GO" id="GO:0009507">
    <property type="term" value="C:chloroplast"/>
    <property type="evidence" value="ECO:0007669"/>
    <property type="project" value="UniProtKB-SubCell"/>
</dbReference>
<dbReference type="GO" id="GO:0003723">
    <property type="term" value="F:RNA binding"/>
    <property type="evidence" value="ECO:0007669"/>
    <property type="project" value="UniProtKB-KW"/>
</dbReference>
<dbReference type="GO" id="GO:0006397">
    <property type="term" value="P:mRNA processing"/>
    <property type="evidence" value="ECO:0007669"/>
    <property type="project" value="UniProtKB-KW"/>
</dbReference>
<dbReference type="GO" id="GO:0008380">
    <property type="term" value="P:RNA splicing"/>
    <property type="evidence" value="ECO:0007669"/>
    <property type="project" value="UniProtKB-UniRule"/>
</dbReference>
<dbReference type="GO" id="GO:0008033">
    <property type="term" value="P:tRNA processing"/>
    <property type="evidence" value="ECO:0007669"/>
    <property type="project" value="UniProtKB-KW"/>
</dbReference>
<dbReference type="HAMAP" id="MF_01390">
    <property type="entry name" value="MatK"/>
    <property type="match status" value="1"/>
</dbReference>
<dbReference type="InterPro" id="IPR024937">
    <property type="entry name" value="Domain_X"/>
</dbReference>
<dbReference type="InterPro" id="IPR002866">
    <property type="entry name" value="Maturase_MatK"/>
</dbReference>
<dbReference type="InterPro" id="IPR024942">
    <property type="entry name" value="Maturase_MatK_N"/>
</dbReference>
<dbReference type="PANTHER" id="PTHR34811">
    <property type="entry name" value="MATURASE K"/>
    <property type="match status" value="1"/>
</dbReference>
<dbReference type="PANTHER" id="PTHR34811:SF1">
    <property type="entry name" value="MATURASE K"/>
    <property type="match status" value="1"/>
</dbReference>
<dbReference type="Pfam" id="PF01348">
    <property type="entry name" value="Intron_maturas2"/>
    <property type="match status" value="1"/>
</dbReference>
<dbReference type="Pfam" id="PF01824">
    <property type="entry name" value="MatK_N"/>
    <property type="match status" value="1"/>
</dbReference>
<evidence type="ECO:0000255" key="1">
    <source>
        <dbReference type="HAMAP-Rule" id="MF_01390"/>
    </source>
</evidence>
<protein>
    <recommendedName>
        <fullName evidence="1">Maturase K</fullName>
    </recommendedName>
    <alternativeName>
        <fullName evidence="1">Intron maturase</fullName>
    </alternativeName>
</protein>
<comment type="function">
    <text evidence="1">Usually encoded in the trnK tRNA gene intron. Probably assists in splicing its own and other chloroplast group II introns.</text>
</comment>
<comment type="subcellular location">
    <subcellularLocation>
        <location>Plastid</location>
        <location>Chloroplast</location>
    </subcellularLocation>
</comment>
<comment type="similarity">
    <text evidence="1">Belongs to the intron maturase 2 family. MatK subfamily.</text>
</comment>
<name>MATK_IBILU</name>
<reference key="1">
    <citation type="journal article" date="2004" name="Plant Biol.">
        <title>Evolution of carnivory in lentibulariaceae and the Lamiales.</title>
        <authorList>
            <person name="Mueller K.F."/>
            <person name="Borsch T."/>
            <person name="Legendre L."/>
            <person name="Porembski S."/>
            <person name="Theisen I."/>
            <person name="Barthlott W."/>
        </authorList>
    </citation>
    <scope>NUCLEOTIDE SEQUENCE [GENOMIC DNA]</scope>
</reference>
<sequence>MEEIQRYLQLERSQQHDFLYPLIFQEYIYTFAHDRGFSRSILSENPGYDNKSSLLIVKRLITRMYQQNHFIISPNDSNQNPFWARNKNLYSQIISEGFAFIVEIPFSIRLISCLEGKKIVKSQNLRSIHSIFPFLEDNFSHLNFVLDILIPHSVHVEILVQTLRYWVKDASSLHLLRFFLNEYCNWNSLITPKKASSSFSKRNQRLFLFLYNSHVCEYESIFVFLRNQSSHLRSTSSGVLLERIYFYRKIERLVNVFVKVKDFQANLWFVKEPCMHYIRYQRKSILASKGTSLFMNKWKCYFVTFWQWHFSLWFHPSRIYINQLSNHSLEFLGYLSSVRINPSVVRSQILENAFLINNAIKKFDTLVPIIPLIASLAKAKFCNVLGHPVSKPGRADLSDSNIIDRFGCICRNLSHYHSGSSKKKSLYRIKYILRLSCARTLARKHKSTVRAFLKRLGSEFLEQFLMSEEDVLFLTFQKASSTLRGVYRSRIWYLDIISINDLANHKSKF</sequence>